<feature type="chain" id="PRO_0000188419" description="Glycerol-3-phosphate acyltransferase">
    <location>
        <begin position="1"/>
        <end position="191"/>
    </location>
</feature>
<feature type="transmembrane region" description="Helical" evidence="1">
    <location>
        <begin position="3"/>
        <end position="23"/>
    </location>
</feature>
<feature type="transmembrane region" description="Helical" evidence="1">
    <location>
        <begin position="51"/>
        <end position="71"/>
    </location>
</feature>
<feature type="transmembrane region" description="Helical" evidence="1">
    <location>
        <begin position="78"/>
        <end position="98"/>
    </location>
</feature>
<feature type="transmembrane region" description="Helical" evidence="1">
    <location>
        <begin position="108"/>
        <end position="128"/>
    </location>
</feature>
<feature type="transmembrane region" description="Helical" evidence="1">
    <location>
        <begin position="150"/>
        <end position="170"/>
    </location>
</feature>
<keyword id="KW-0997">Cell inner membrane</keyword>
<keyword id="KW-1003">Cell membrane</keyword>
<keyword id="KW-0444">Lipid biosynthesis</keyword>
<keyword id="KW-0443">Lipid metabolism</keyword>
<keyword id="KW-0472">Membrane</keyword>
<keyword id="KW-0594">Phospholipid biosynthesis</keyword>
<keyword id="KW-1208">Phospholipid metabolism</keyword>
<keyword id="KW-1185">Reference proteome</keyword>
<keyword id="KW-0808">Transferase</keyword>
<keyword id="KW-0812">Transmembrane</keyword>
<keyword id="KW-1133">Transmembrane helix</keyword>
<reference key="1">
    <citation type="journal article" date="2005" name="Science">
        <title>Genome streamlining in a cosmopolitan oceanic bacterium.</title>
        <authorList>
            <person name="Giovannoni S.J."/>
            <person name="Tripp H.J."/>
            <person name="Givan S."/>
            <person name="Podar M."/>
            <person name="Vergin K.L."/>
            <person name="Baptista D."/>
            <person name="Bibbs L."/>
            <person name="Eads J."/>
            <person name="Richardson T.H."/>
            <person name="Noordewier M."/>
            <person name="Rappe M.S."/>
            <person name="Short J.M."/>
            <person name="Carrington J.C."/>
            <person name="Mathur E.J."/>
        </authorList>
    </citation>
    <scope>NUCLEOTIDE SEQUENCE [LARGE SCALE GENOMIC DNA]</scope>
    <source>
        <strain>HTCC1062</strain>
    </source>
</reference>
<gene>
    <name evidence="1" type="primary">plsY</name>
    <name type="ordered locus">SAR11_1082</name>
</gene>
<name>PLSY_PELUB</name>
<comment type="function">
    <text evidence="1">Catalyzes the transfer of an acyl group from acyl-phosphate (acyl-PO(4)) to glycerol-3-phosphate (G3P) to form lysophosphatidic acid (LPA). This enzyme utilizes acyl-phosphate as fatty acyl donor, but not acyl-CoA or acyl-ACP.</text>
</comment>
<comment type="catalytic activity">
    <reaction evidence="1">
        <text>an acyl phosphate + sn-glycerol 3-phosphate = a 1-acyl-sn-glycero-3-phosphate + phosphate</text>
        <dbReference type="Rhea" id="RHEA:34075"/>
        <dbReference type="ChEBI" id="CHEBI:43474"/>
        <dbReference type="ChEBI" id="CHEBI:57597"/>
        <dbReference type="ChEBI" id="CHEBI:57970"/>
        <dbReference type="ChEBI" id="CHEBI:59918"/>
        <dbReference type="EC" id="2.3.1.275"/>
    </reaction>
</comment>
<comment type="pathway">
    <text evidence="1">Lipid metabolism; phospholipid metabolism.</text>
</comment>
<comment type="subunit">
    <text evidence="1">Probably interacts with PlsX.</text>
</comment>
<comment type="subcellular location">
    <subcellularLocation>
        <location evidence="1">Cell inner membrane</location>
        <topology evidence="1">Multi-pass membrane protein</topology>
    </subcellularLocation>
</comment>
<comment type="similarity">
    <text evidence="1">Belongs to the PlsY family.</text>
</comment>
<accession>Q4FLQ2</accession>
<evidence type="ECO:0000255" key="1">
    <source>
        <dbReference type="HAMAP-Rule" id="MF_01043"/>
    </source>
</evidence>
<protein>
    <recommendedName>
        <fullName evidence="1">Glycerol-3-phosphate acyltransferase</fullName>
    </recommendedName>
    <alternativeName>
        <fullName evidence="1">Acyl-PO4 G3P acyltransferase</fullName>
    </alternativeName>
    <alternativeName>
        <fullName evidence="1">Acyl-phosphate--glycerol-3-phosphate acyltransferase</fullName>
    </alternativeName>
    <alternativeName>
        <fullName evidence="1">G3P acyltransferase</fullName>
        <shortName evidence="1">GPAT</shortName>
        <ecNumber evidence="1">2.3.1.275</ecNumber>
    </alternativeName>
    <alternativeName>
        <fullName evidence="1">Lysophosphatidic acid synthase</fullName>
        <shortName evidence="1">LPA synthase</shortName>
    </alternativeName>
</protein>
<organism>
    <name type="scientific">Pelagibacter ubique (strain HTCC1062)</name>
    <dbReference type="NCBI Taxonomy" id="335992"/>
    <lineage>
        <taxon>Bacteria</taxon>
        <taxon>Pseudomonadati</taxon>
        <taxon>Pseudomonadota</taxon>
        <taxon>Alphaproteobacteria</taxon>
        <taxon>Candidatus Pelagibacterales</taxon>
        <taxon>Candidatus Pelagibacteraceae</taxon>
        <taxon>Candidatus Pelagibacter</taxon>
    </lineage>
</organism>
<proteinExistence type="inferred from homology"/>
<dbReference type="EC" id="2.3.1.275" evidence="1"/>
<dbReference type="EMBL" id="CP000084">
    <property type="protein sequence ID" value="AAZ21886.1"/>
    <property type="molecule type" value="Genomic_DNA"/>
</dbReference>
<dbReference type="RefSeq" id="WP_006996845.1">
    <property type="nucleotide sequence ID" value="NC_007205.1"/>
</dbReference>
<dbReference type="SMR" id="Q4FLQ2"/>
<dbReference type="STRING" id="335992.SAR11_1082"/>
<dbReference type="GeneID" id="66295572"/>
<dbReference type="KEGG" id="pub:SAR11_1082"/>
<dbReference type="eggNOG" id="COG0344">
    <property type="taxonomic scope" value="Bacteria"/>
</dbReference>
<dbReference type="HOGENOM" id="CLU_081254_1_0_5"/>
<dbReference type="OrthoDB" id="9777124at2"/>
<dbReference type="UniPathway" id="UPA00085"/>
<dbReference type="Proteomes" id="UP000002528">
    <property type="component" value="Chromosome"/>
</dbReference>
<dbReference type="GO" id="GO:0005886">
    <property type="term" value="C:plasma membrane"/>
    <property type="evidence" value="ECO:0007669"/>
    <property type="project" value="UniProtKB-SubCell"/>
</dbReference>
<dbReference type="GO" id="GO:0043772">
    <property type="term" value="F:acyl-phosphate glycerol-3-phosphate acyltransferase activity"/>
    <property type="evidence" value="ECO:0007669"/>
    <property type="project" value="UniProtKB-UniRule"/>
</dbReference>
<dbReference type="GO" id="GO:0008654">
    <property type="term" value="P:phospholipid biosynthetic process"/>
    <property type="evidence" value="ECO:0007669"/>
    <property type="project" value="UniProtKB-UniRule"/>
</dbReference>
<dbReference type="HAMAP" id="MF_01043">
    <property type="entry name" value="PlsY"/>
    <property type="match status" value="1"/>
</dbReference>
<dbReference type="InterPro" id="IPR003811">
    <property type="entry name" value="G3P_acylTferase_PlsY"/>
</dbReference>
<dbReference type="NCBIfam" id="TIGR00023">
    <property type="entry name" value="glycerol-3-phosphate 1-O-acyltransferase PlsY"/>
    <property type="match status" value="1"/>
</dbReference>
<dbReference type="PANTHER" id="PTHR30309:SF0">
    <property type="entry name" value="GLYCEROL-3-PHOSPHATE ACYLTRANSFERASE-RELATED"/>
    <property type="match status" value="1"/>
</dbReference>
<dbReference type="PANTHER" id="PTHR30309">
    <property type="entry name" value="INNER MEMBRANE PROTEIN YGIH"/>
    <property type="match status" value="1"/>
</dbReference>
<dbReference type="Pfam" id="PF02660">
    <property type="entry name" value="G3P_acyltransf"/>
    <property type="match status" value="1"/>
</dbReference>
<dbReference type="SMART" id="SM01207">
    <property type="entry name" value="G3P_acyltransf"/>
    <property type="match status" value="1"/>
</dbReference>
<sequence length="191" mass="21605">MEYLIVALSSYLLGSIPFGFILTKIFLKKDIRDIGSGNIGATNALRTGNKTLGYATLLLDITKAVLPVLYVKFNYPDYIFIASLSAFLGHVFPIWLKFKGGKGVATYVGILFSINIFLGLVFIISWAVTFLISKYSSLSSLVGSLMVPMYLIVFENYNSIFFIIMFVLIFYTHRENVKRLKNKEETKTKIY</sequence>